<protein>
    <recommendedName>
        <fullName evidence="1">Small ribosomal subunit protein uS10</fullName>
    </recommendedName>
    <alternativeName>
        <fullName evidence="2">30S ribosomal protein S10</fullName>
    </alternativeName>
</protein>
<evidence type="ECO:0000255" key="1">
    <source>
        <dbReference type="HAMAP-Rule" id="MF_00508"/>
    </source>
</evidence>
<evidence type="ECO:0000305" key="2"/>
<sequence>MQNQQIRIRLKAFDHRLIDQSTQEIVETAKRTGAQVRGPIPLPTRKERYTVLISPHVNKDARDQYEIRTHKRVLDIVQPTDKTVDALMKLDLAAGVEVQISLG</sequence>
<keyword id="KW-0687">Ribonucleoprotein</keyword>
<keyword id="KW-0689">Ribosomal protein</keyword>
<name>RS10_AZOVD</name>
<accession>C1DKL2</accession>
<proteinExistence type="inferred from homology"/>
<comment type="function">
    <text evidence="1">Involved in the binding of tRNA to the ribosomes.</text>
</comment>
<comment type="subunit">
    <text evidence="1">Part of the 30S ribosomal subunit.</text>
</comment>
<comment type="similarity">
    <text evidence="1">Belongs to the universal ribosomal protein uS10 family.</text>
</comment>
<feature type="chain" id="PRO_1000206575" description="Small ribosomal subunit protein uS10">
    <location>
        <begin position="1"/>
        <end position="103"/>
    </location>
</feature>
<reference key="1">
    <citation type="journal article" date="2009" name="J. Bacteriol.">
        <title>Genome sequence of Azotobacter vinelandii, an obligate aerobe specialized to support diverse anaerobic metabolic processes.</title>
        <authorList>
            <person name="Setubal J.C."/>
            <person name="Dos Santos P."/>
            <person name="Goldman B.S."/>
            <person name="Ertesvaag H."/>
            <person name="Espin G."/>
            <person name="Rubio L.M."/>
            <person name="Valla S."/>
            <person name="Almeida N.F."/>
            <person name="Balasubramanian D."/>
            <person name="Cromes L."/>
            <person name="Curatti L."/>
            <person name="Du Z."/>
            <person name="Godsy E."/>
            <person name="Goodner B."/>
            <person name="Hellner-Burris K."/>
            <person name="Hernandez J.A."/>
            <person name="Houmiel K."/>
            <person name="Imperial J."/>
            <person name="Kennedy C."/>
            <person name="Larson T.J."/>
            <person name="Latreille P."/>
            <person name="Ligon L.S."/>
            <person name="Lu J."/>
            <person name="Maerk M."/>
            <person name="Miller N.M."/>
            <person name="Norton S."/>
            <person name="O'Carroll I.P."/>
            <person name="Paulsen I."/>
            <person name="Raulfs E.C."/>
            <person name="Roemer R."/>
            <person name="Rosser J."/>
            <person name="Segura D."/>
            <person name="Slater S."/>
            <person name="Stricklin S.L."/>
            <person name="Studholme D.J."/>
            <person name="Sun J."/>
            <person name="Viana C.J."/>
            <person name="Wallin E."/>
            <person name="Wang B."/>
            <person name="Wheeler C."/>
            <person name="Zhu H."/>
            <person name="Dean D.R."/>
            <person name="Dixon R."/>
            <person name="Wood D."/>
        </authorList>
    </citation>
    <scope>NUCLEOTIDE SEQUENCE [LARGE SCALE GENOMIC DNA]</scope>
    <source>
        <strain>DJ / ATCC BAA-1303</strain>
    </source>
</reference>
<organism>
    <name type="scientific">Azotobacter vinelandii (strain DJ / ATCC BAA-1303)</name>
    <dbReference type="NCBI Taxonomy" id="322710"/>
    <lineage>
        <taxon>Bacteria</taxon>
        <taxon>Pseudomonadati</taxon>
        <taxon>Pseudomonadota</taxon>
        <taxon>Gammaproteobacteria</taxon>
        <taxon>Pseudomonadales</taxon>
        <taxon>Pseudomonadaceae</taxon>
        <taxon>Azotobacter</taxon>
    </lineage>
</organism>
<dbReference type="EMBL" id="CP001157">
    <property type="protein sequence ID" value="ACO76875.1"/>
    <property type="molecule type" value="Genomic_DNA"/>
</dbReference>
<dbReference type="RefSeq" id="WP_003243886.1">
    <property type="nucleotide sequence ID" value="NZ_CP144736.1"/>
</dbReference>
<dbReference type="SMR" id="C1DKL2"/>
<dbReference type="STRING" id="322710.Avin_06240"/>
<dbReference type="EnsemblBacteria" id="ACO76875">
    <property type="protein sequence ID" value="ACO76875"/>
    <property type="gene ID" value="Avin_06240"/>
</dbReference>
<dbReference type="GeneID" id="88184035"/>
<dbReference type="KEGG" id="avn:Avin_06240"/>
<dbReference type="eggNOG" id="COG0051">
    <property type="taxonomic scope" value="Bacteria"/>
</dbReference>
<dbReference type="HOGENOM" id="CLU_122625_1_3_6"/>
<dbReference type="OrthoDB" id="9804464at2"/>
<dbReference type="Proteomes" id="UP000002424">
    <property type="component" value="Chromosome"/>
</dbReference>
<dbReference type="GO" id="GO:1990904">
    <property type="term" value="C:ribonucleoprotein complex"/>
    <property type="evidence" value="ECO:0007669"/>
    <property type="project" value="UniProtKB-KW"/>
</dbReference>
<dbReference type="GO" id="GO:0005840">
    <property type="term" value="C:ribosome"/>
    <property type="evidence" value="ECO:0007669"/>
    <property type="project" value="UniProtKB-KW"/>
</dbReference>
<dbReference type="GO" id="GO:0003735">
    <property type="term" value="F:structural constituent of ribosome"/>
    <property type="evidence" value="ECO:0007669"/>
    <property type="project" value="InterPro"/>
</dbReference>
<dbReference type="GO" id="GO:0000049">
    <property type="term" value="F:tRNA binding"/>
    <property type="evidence" value="ECO:0007669"/>
    <property type="project" value="UniProtKB-UniRule"/>
</dbReference>
<dbReference type="GO" id="GO:0006412">
    <property type="term" value="P:translation"/>
    <property type="evidence" value="ECO:0007669"/>
    <property type="project" value="UniProtKB-UniRule"/>
</dbReference>
<dbReference type="FunFam" id="3.30.70.600:FF:000001">
    <property type="entry name" value="30S ribosomal protein S10"/>
    <property type="match status" value="1"/>
</dbReference>
<dbReference type="Gene3D" id="3.30.70.600">
    <property type="entry name" value="Ribosomal protein S10 domain"/>
    <property type="match status" value="1"/>
</dbReference>
<dbReference type="HAMAP" id="MF_00508">
    <property type="entry name" value="Ribosomal_uS10"/>
    <property type="match status" value="1"/>
</dbReference>
<dbReference type="InterPro" id="IPR001848">
    <property type="entry name" value="Ribosomal_uS10"/>
</dbReference>
<dbReference type="InterPro" id="IPR018268">
    <property type="entry name" value="Ribosomal_uS10_CS"/>
</dbReference>
<dbReference type="InterPro" id="IPR027486">
    <property type="entry name" value="Ribosomal_uS10_dom"/>
</dbReference>
<dbReference type="InterPro" id="IPR036838">
    <property type="entry name" value="Ribosomal_uS10_dom_sf"/>
</dbReference>
<dbReference type="NCBIfam" id="NF001861">
    <property type="entry name" value="PRK00596.1"/>
    <property type="match status" value="1"/>
</dbReference>
<dbReference type="NCBIfam" id="TIGR01049">
    <property type="entry name" value="rpsJ_bact"/>
    <property type="match status" value="1"/>
</dbReference>
<dbReference type="PANTHER" id="PTHR11700">
    <property type="entry name" value="30S RIBOSOMAL PROTEIN S10 FAMILY MEMBER"/>
    <property type="match status" value="1"/>
</dbReference>
<dbReference type="Pfam" id="PF00338">
    <property type="entry name" value="Ribosomal_S10"/>
    <property type="match status" value="1"/>
</dbReference>
<dbReference type="PRINTS" id="PR00971">
    <property type="entry name" value="RIBOSOMALS10"/>
</dbReference>
<dbReference type="SMART" id="SM01403">
    <property type="entry name" value="Ribosomal_S10"/>
    <property type="match status" value="1"/>
</dbReference>
<dbReference type="SUPFAM" id="SSF54999">
    <property type="entry name" value="Ribosomal protein S10"/>
    <property type="match status" value="1"/>
</dbReference>
<dbReference type="PROSITE" id="PS00361">
    <property type="entry name" value="RIBOSOMAL_S10"/>
    <property type="match status" value="1"/>
</dbReference>
<gene>
    <name evidence="1" type="primary">rpsJ</name>
    <name type="ordered locus">Avin_06240</name>
</gene>